<sequence>SSCPGKSSWPHLVGVGGSVAKAIIERQNPNVKAVILEEGTPVTKDFRCNRVRIWVNKRGLVVSPPRIG</sequence>
<proteinExistence type="evidence at protein level"/>
<evidence type="ECO:0000250" key="1"/>
<evidence type="ECO:0000269" key="2">
    <source>
    </source>
</evidence>
<evidence type="ECO:0000305" key="3"/>
<evidence type="ECO:0007829" key="4">
    <source>
        <dbReference type="PDB" id="1HYM"/>
    </source>
</evidence>
<name>ITH5_CUCMA</name>
<feature type="chain" id="PRO_0000217655" description="Inhibitor of trypsin and hageman factor">
    <location>
        <begin position="1"/>
        <end position="68"/>
    </location>
</feature>
<feature type="site" description="Reactive bond" evidence="1">
    <location>
        <begin position="44"/>
        <end position="45"/>
    </location>
</feature>
<feature type="modified residue" description="N-acetylserine" evidence="2">
    <location>
        <position position="1"/>
    </location>
</feature>
<feature type="disulfide bond">
    <location>
        <begin position="3"/>
        <end position="48"/>
    </location>
</feature>
<feature type="helix" evidence="4">
    <location>
        <begin position="17"/>
        <end position="27"/>
    </location>
</feature>
<feature type="strand" evidence="4">
    <location>
        <begin position="32"/>
        <end position="37"/>
    </location>
</feature>
<feature type="strand" evidence="4">
    <location>
        <begin position="50"/>
        <end position="56"/>
    </location>
</feature>
<feature type="turn" evidence="4">
    <location>
        <begin position="57"/>
        <end position="59"/>
    </location>
</feature>
<feature type="strand" evidence="4">
    <location>
        <begin position="60"/>
        <end position="62"/>
    </location>
</feature>
<keyword id="KW-0002">3D-structure</keyword>
<keyword id="KW-0007">Acetylation</keyword>
<keyword id="KW-0903">Direct protein sequencing</keyword>
<keyword id="KW-1015">Disulfide bond</keyword>
<keyword id="KW-0646">Protease inhibitor</keyword>
<keyword id="KW-1185">Reference proteome</keyword>
<keyword id="KW-0722">Serine protease inhibitor</keyword>
<dbReference type="PIR" id="S12897">
    <property type="entry name" value="S12897"/>
</dbReference>
<dbReference type="PDB" id="1HYM">
    <property type="method" value="NMR"/>
    <property type="chains" value="A=1-44, B=45-68"/>
</dbReference>
<dbReference type="PDB" id="1MIT">
    <property type="method" value="NMR"/>
    <property type="chains" value="A=1-68"/>
</dbReference>
<dbReference type="PDB" id="1TIN">
    <property type="method" value="NMR"/>
    <property type="chains" value="A=1-68"/>
</dbReference>
<dbReference type="PDBsum" id="1HYM"/>
<dbReference type="PDBsum" id="1MIT"/>
<dbReference type="PDBsum" id="1TIN"/>
<dbReference type="SMR" id="P19873"/>
<dbReference type="MEROPS" id="I13.008"/>
<dbReference type="iPTMnet" id="P19873"/>
<dbReference type="EvolutionaryTrace" id="P19873"/>
<dbReference type="Proteomes" id="UP000504608">
    <property type="component" value="Unplaced"/>
</dbReference>
<dbReference type="GO" id="GO:0004867">
    <property type="term" value="F:serine-type endopeptidase inhibitor activity"/>
    <property type="evidence" value="ECO:0007669"/>
    <property type="project" value="UniProtKB-KW"/>
</dbReference>
<dbReference type="GO" id="GO:0009611">
    <property type="term" value="P:response to wounding"/>
    <property type="evidence" value="ECO:0007669"/>
    <property type="project" value="InterPro"/>
</dbReference>
<dbReference type="Gene3D" id="3.30.10.10">
    <property type="entry name" value="Trypsin Inhibitor V, subunit A"/>
    <property type="match status" value="1"/>
</dbReference>
<dbReference type="InterPro" id="IPR000864">
    <property type="entry name" value="Prot_inh_pot1"/>
</dbReference>
<dbReference type="InterPro" id="IPR036354">
    <property type="entry name" value="Prot_inh_pot1_sf"/>
</dbReference>
<dbReference type="PANTHER" id="PTHR33091:SF73">
    <property type="entry name" value="INHIBITOR OF TRYPSIN AND HAGEMAN FACTOR-LIKE"/>
    <property type="match status" value="1"/>
</dbReference>
<dbReference type="PANTHER" id="PTHR33091">
    <property type="entry name" value="PROTEIN, PUTATIVE, EXPRESSED-RELATED"/>
    <property type="match status" value="1"/>
</dbReference>
<dbReference type="Pfam" id="PF00280">
    <property type="entry name" value="potato_inhibit"/>
    <property type="match status" value="1"/>
</dbReference>
<dbReference type="PRINTS" id="PR00292">
    <property type="entry name" value="POTATOINHBTR"/>
</dbReference>
<dbReference type="SUPFAM" id="SSF54654">
    <property type="entry name" value="CI-2 family of serine protease inhibitors"/>
    <property type="match status" value="1"/>
</dbReference>
<dbReference type="PROSITE" id="PS00285">
    <property type="entry name" value="POTATO_INHIBITOR"/>
    <property type="match status" value="1"/>
</dbReference>
<accession>P19873</accession>
<protein>
    <recommendedName>
        <fullName>Inhibitor of trypsin and hageman factor</fullName>
    </recommendedName>
    <alternativeName>
        <fullName>CMTI-V</fullName>
    </alternativeName>
</protein>
<comment type="function">
    <text>Specifically inhibits both trypsin and activated Hageman factor.</text>
</comment>
<comment type="similarity">
    <text evidence="3">Belongs to the protease inhibitor I13 (potato type I serine protease inhibitor) family.</text>
</comment>
<reference key="1">
    <citation type="journal article" date="1990" name="FEBS Lett.">
        <title>A new protein inhibitor of trypsin and activated Hageman factor from pumpkin (Cucurbita maxima) seeds.</title>
        <authorList>
            <person name="Krishnamoorthi R."/>
            <person name="Gong Y.X."/>
            <person name="Richardson M."/>
        </authorList>
    </citation>
    <scope>PROTEIN SEQUENCE</scope>
    <scope>ACETYLATION AT SER-1</scope>
    <source>
        <tissue>Seed</tissue>
    </source>
</reference>
<reference key="2">
    <citation type="journal article" date="1996" name="Biochemistry">
        <title>Solution structure and backbone dynamics of recombinant Cucurbita maxima trypsin inhibitor-V determined by NMR spectroscopy.</title>
        <authorList>
            <person name="Liu J."/>
            <person name="Prakash O."/>
            <person name="Cai M."/>
            <person name="Gong Y.X."/>
            <person name="Huang Y."/>
            <person name="Wen L."/>
            <person name="Wen J.J."/>
            <person name="Huang J.-K."/>
            <person name="Krishnamoorthi R."/>
        </authorList>
    </citation>
    <scope>STRUCTURE BY NMR</scope>
    <source>
        <tissue>Seed</tissue>
    </source>
</reference>
<reference key="3">
    <citation type="journal article" date="1995" name="Biochemistry">
        <title>Reactive-site hydrolyzed Cucurbita maxima trypsin inhibitor-V: function, thermodynamic stability, and NMR solution structure.</title>
        <authorList>
            <person name="Cai M."/>
            <person name="Gong Y.X."/>
            <person name="Prakash O."/>
            <person name="Krishnamoorthi R."/>
        </authorList>
    </citation>
    <scope>STRUCTURE BY NMR</scope>
</reference>
<organism>
    <name type="scientific">Cucurbita maxima</name>
    <name type="common">Pumpkin</name>
    <name type="synonym">Winter squash</name>
    <dbReference type="NCBI Taxonomy" id="3661"/>
    <lineage>
        <taxon>Eukaryota</taxon>
        <taxon>Viridiplantae</taxon>
        <taxon>Streptophyta</taxon>
        <taxon>Embryophyta</taxon>
        <taxon>Tracheophyta</taxon>
        <taxon>Spermatophyta</taxon>
        <taxon>Magnoliopsida</taxon>
        <taxon>eudicotyledons</taxon>
        <taxon>Gunneridae</taxon>
        <taxon>Pentapetalae</taxon>
        <taxon>rosids</taxon>
        <taxon>fabids</taxon>
        <taxon>Cucurbitales</taxon>
        <taxon>Cucurbitaceae</taxon>
        <taxon>Cucurbiteae</taxon>
        <taxon>Cucurbita</taxon>
    </lineage>
</organism>